<keyword id="KW-0002">3D-structure</keyword>
<keyword id="KW-0903">Direct protein sequencing</keyword>
<keyword id="KW-0479">Metal-binding</keyword>
<keyword id="KW-0597">Phosphoprotein</keyword>
<keyword id="KW-1267">Proteomics identification</keyword>
<keyword id="KW-1185">Reference proteome</keyword>
<keyword id="KW-0862">Zinc</keyword>
<reference key="1">
    <citation type="journal article" date="2004" name="Nat. Genet.">
        <title>Complete sequencing and characterization of 21,243 full-length human cDNAs.</title>
        <authorList>
            <person name="Ota T."/>
            <person name="Suzuki Y."/>
            <person name="Nishikawa T."/>
            <person name="Otsuki T."/>
            <person name="Sugiyama T."/>
            <person name="Irie R."/>
            <person name="Wakamatsu A."/>
            <person name="Hayashi K."/>
            <person name="Sato H."/>
            <person name="Nagai K."/>
            <person name="Kimura K."/>
            <person name="Makita H."/>
            <person name="Sekine M."/>
            <person name="Obayashi M."/>
            <person name="Nishi T."/>
            <person name="Shibahara T."/>
            <person name="Tanaka T."/>
            <person name="Ishii S."/>
            <person name="Yamamoto J."/>
            <person name="Saito K."/>
            <person name="Kawai Y."/>
            <person name="Isono Y."/>
            <person name="Nakamura Y."/>
            <person name="Nagahari K."/>
            <person name="Murakami K."/>
            <person name="Yasuda T."/>
            <person name="Iwayanagi T."/>
            <person name="Wagatsuma M."/>
            <person name="Shiratori A."/>
            <person name="Sudo H."/>
            <person name="Hosoiri T."/>
            <person name="Kaku Y."/>
            <person name="Kodaira H."/>
            <person name="Kondo H."/>
            <person name="Sugawara M."/>
            <person name="Takahashi M."/>
            <person name="Kanda K."/>
            <person name="Yokoi T."/>
            <person name="Furuya T."/>
            <person name="Kikkawa E."/>
            <person name="Omura Y."/>
            <person name="Abe K."/>
            <person name="Kamihara K."/>
            <person name="Katsuta N."/>
            <person name="Sato K."/>
            <person name="Tanikawa M."/>
            <person name="Yamazaki M."/>
            <person name="Ninomiya K."/>
            <person name="Ishibashi T."/>
            <person name="Yamashita H."/>
            <person name="Murakawa K."/>
            <person name="Fujimori K."/>
            <person name="Tanai H."/>
            <person name="Kimata M."/>
            <person name="Watanabe M."/>
            <person name="Hiraoka S."/>
            <person name="Chiba Y."/>
            <person name="Ishida S."/>
            <person name="Ono Y."/>
            <person name="Takiguchi S."/>
            <person name="Watanabe S."/>
            <person name="Yosida M."/>
            <person name="Hotuta T."/>
            <person name="Kusano J."/>
            <person name="Kanehori K."/>
            <person name="Takahashi-Fujii A."/>
            <person name="Hara H."/>
            <person name="Tanase T.-O."/>
            <person name="Nomura Y."/>
            <person name="Togiya S."/>
            <person name="Komai F."/>
            <person name="Hara R."/>
            <person name="Takeuchi K."/>
            <person name="Arita M."/>
            <person name="Imose N."/>
            <person name="Musashino K."/>
            <person name="Yuuki H."/>
            <person name="Oshima A."/>
            <person name="Sasaki N."/>
            <person name="Aotsuka S."/>
            <person name="Yoshikawa Y."/>
            <person name="Matsunawa H."/>
            <person name="Ichihara T."/>
            <person name="Shiohata N."/>
            <person name="Sano S."/>
            <person name="Moriya S."/>
            <person name="Momiyama H."/>
            <person name="Satoh N."/>
            <person name="Takami S."/>
            <person name="Terashima Y."/>
            <person name="Suzuki O."/>
            <person name="Nakagawa S."/>
            <person name="Senoh A."/>
            <person name="Mizoguchi H."/>
            <person name="Goto Y."/>
            <person name="Shimizu F."/>
            <person name="Wakebe H."/>
            <person name="Hishigaki H."/>
            <person name="Watanabe T."/>
            <person name="Sugiyama A."/>
            <person name="Takemoto M."/>
            <person name="Kawakami B."/>
            <person name="Yamazaki M."/>
            <person name="Watanabe K."/>
            <person name="Kumagai A."/>
            <person name="Itakura S."/>
            <person name="Fukuzumi Y."/>
            <person name="Fujimori Y."/>
            <person name="Komiyama M."/>
            <person name="Tashiro H."/>
            <person name="Tanigami A."/>
            <person name="Fujiwara T."/>
            <person name="Ono T."/>
            <person name="Yamada K."/>
            <person name="Fujii Y."/>
            <person name="Ozaki K."/>
            <person name="Hirao M."/>
            <person name="Ohmori Y."/>
            <person name="Kawabata A."/>
            <person name="Hikiji T."/>
            <person name="Kobatake N."/>
            <person name="Inagaki H."/>
            <person name="Ikema Y."/>
            <person name="Okamoto S."/>
            <person name="Okitani R."/>
            <person name="Kawakami T."/>
            <person name="Noguchi S."/>
            <person name="Itoh T."/>
            <person name="Shigeta K."/>
            <person name="Senba T."/>
            <person name="Matsumura K."/>
            <person name="Nakajima Y."/>
            <person name="Mizuno T."/>
            <person name="Morinaga M."/>
            <person name="Sasaki M."/>
            <person name="Togashi T."/>
            <person name="Oyama M."/>
            <person name="Hata H."/>
            <person name="Watanabe M."/>
            <person name="Komatsu T."/>
            <person name="Mizushima-Sugano J."/>
            <person name="Satoh T."/>
            <person name="Shirai Y."/>
            <person name="Takahashi Y."/>
            <person name="Nakagawa K."/>
            <person name="Okumura K."/>
            <person name="Nagase T."/>
            <person name="Nomura N."/>
            <person name="Kikuchi H."/>
            <person name="Masuho Y."/>
            <person name="Yamashita R."/>
            <person name="Nakai K."/>
            <person name="Yada T."/>
            <person name="Nakamura Y."/>
            <person name="Ohara O."/>
            <person name="Isogai T."/>
            <person name="Sugano S."/>
        </authorList>
    </citation>
    <scope>NUCLEOTIDE SEQUENCE [LARGE SCALE MRNA]</scope>
</reference>
<reference key="2">
    <citation type="submission" date="2004-06" db="EMBL/GenBank/DDBJ databases">
        <title>Cloning of human full open reading frames in Gateway(TM) system entry vector (pDONR201).</title>
        <authorList>
            <person name="Ebert L."/>
            <person name="Schick M."/>
            <person name="Neubert P."/>
            <person name="Schatten R."/>
            <person name="Henze S."/>
            <person name="Korn B."/>
        </authorList>
    </citation>
    <scope>NUCLEOTIDE SEQUENCE [LARGE SCALE MRNA]</scope>
</reference>
<reference key="3">
    <citation type="journal article" date="2006" name="Nature">
        <title>The DNA sequence and biological annotation of human chromosome 1.</title>
        <authorList>
            <person name="Gregory S.G."/>
            <person name="Barlow K.F."/>
            <person name="McLay K.E."/>
            <person name="Kaul R."/>
            <person name="Swarbreck D."/>
            <person name="Dunham A."/>
            <person name="Scott C.E."/>
            <person name="Howe K.L."/>
            <person name="Woodfine K."/>
            <person name="Spencer C.C.A."/>
            <person name="Jones M.C."/>
            <person name="Gillson C."/>
            <person name="Searle S."/>
            <person name="Zhou Y."/>
            <person name="Kokocinski F."/>
            <person name="McDonald L."/>
            <person name="Evans R."/>
            <person name="Phillips K."/>
            <person name="Atkinson A."/>
            <person name="Cooper R."/>
            <person name="Jones C."/>
            <person name="Hall R.E."/>
            <person name="Andrews T.D."/>
            <person name="Lloyd C."/>
            <person name="Ainscough R."/>
            <person name="Almeida J.P."/>
            <person name="Ambrose K.D."/>
            <person name="Anderson F."/>
            <person name="Andrew R.W."/>
            <person name="Ashwell R.I.S."/>
            <person name="Aubin K."/>
            <person name="Babbage A.K."/>
            <person name="Bagguley C.L."/>
            <person name="Bailey J."/>
            <person name="Beasley H."/>
            <person name="Bethel G."/>
            <person name="Bird C.P."/>
            <person name="Bray-Allen S."/>
            <person name="Brown J.Y."/>
            <person name="Brown A.J."/>
            <person name="Buckley D."/>
            <person name="Burton J."/>
            <person name="Bye J."/>
            <person name="Carder C."/>
            <person name="Chapman J.C."/>
            <person name="Clark S.Y."/>
            <person name="Clarke G."/>
            <person name="Clee C."/>
            <person name="Cobley V."/>
            <person name="Collier R.E."/>
            <person name="Corby N."/>
            <person name="Coville G.J."/>
            <person name="Davies J."/>
            <person name="Deadman R."/>
            <person name="Dunn M."/>
            <person name="Earthrowl M."/>
            <person name="Ellington A.G."/>
            <person name="Errington H."/>
            <person name="Frankish A."/>
            <person name="Frankland J."/>
            <person name="French L."/>
            <person name="Garner P."/>
            <person name="Garnett J."/>
            <person name="Gay L."/>
            <person name="Ghori M.R.J."/>
            <person name="Gibson R."/>
            <person name="Gilby L.M."/>
            <person name="Gillett W."/>
            <person name="Glithero R.J."/>
            <person name="Grafham D.V."/>
            <person name="Griffiths C."/>
            <person name="Griffiths-Jones S."/>
            <person name="Grocock R."/>
            <person name="Hammond S."/>
            <person name="Harrison E.S.I."/>
            <person name="Hart E."/>
            <person name="Haugen E."/>
            <person name="Heath P.D."/>
            <person name="Holmes S."/>
            <person name="Holt K."/>
            <person name="Howden P.J."/>
            <person name="Hunt A.R."/>
            <person name="Hunt S.E."/>
            <person name="Hunter G."/>
            <person name="Isherwood J."/>
            <person name="James R."/>
            <person name="Johnson C."/>
            <person name="Johnson D."/>
            <person name="Joy A."/>
            <person name="Kay M."/>
            <person name="Kershaw J.K."/>
            <person name="Kibukawa M."/>
            <person name="Kimberley A.M."/>
            <person name="King A."/>
            <person name="Knights A.J."/>
            <person name="Lad H."/>
            <person name="Laird G."/>
            <person name="Lawlor S."/>
            <person name="Leongamornlert D.A."/>
            <person name="Lloyd D.M."/>
            <person name="Loveland J."/>
            <person name="Lovell J."/>
            <person name="Lush M.J."/>
            <person name="Lyne R."/>
            <person name="Martin S."/>
            <person name="Mashreghi-Mohammadi M."/>
            <person name="Matthews L."/>
            <person name="Matthews N.S.W."/>
            <person name="McLaren S."/>
            <person name="Milne S."/>
            <person name="Mistry S."/>
            <person name="Moore M.J.F."/>
            <person name="Nickerson T."/>
            <person name="O'Dell C.N."/>
            <person name="Oliver K."/>
            <person name="Palmeiri A."/>
            <person name="Palmer S.A."/>
            <person name="Parker A."/>
            <person name="Patel D."/>
            <person name="Pearce A.V."/>
            <person name="Peck A.I."/>
            <person name="Pelan S."/>
            <person name="Phelps K."/>
            <person name="Phillimore B.J."/>
            <person name="Plumb R."/>
            <person name="Rajan J."/>
            <person name="Raymond C."/>
            <person name="Rouse G."/>
            <person name="Saenphimmachak C."/>
            <person name="Sehra H.K."/>
            <person name="Sheridan E."/>
            <person name="Shownkeen R."/>
            <person name="Sims S."/>
            <person name="Skuce C.D."/>
            <person name="Smith M."/>
            <person name="Steward C."/>
            <person name="Subramanian S."/>
            <person name="Sycamore N."/>
            <person name="Tracey A."/>
            <person name="Tromans A."/>
            <person name="Van Helmond Z."/>
            <person name="Wall M."/>
            <person name="Wallis J.M."/>
            <person name="White S."/>
            <person name="Whitehead S.L."/>
            <person name="Wilkinson J.E."/>
            <person name="Willey D.L."/>
            <person name="Williams H."/>
            <person name="Wilming L."/>
            <person name="Wray P.W."/>
            <person name="Wu Z."/>
            <person name="Coulson A."/>
            <person name="Vaudin M."/>
            <person name="Sulston J.E."/>
            <person name="Durbin R.M."/>
            <person name="Hubbard T."/>
            <person name="Wooster R."/>
            <person name="Dunham I."/>
            <person name="Carter N.P."/>
            <person name="McVean G."/>
            <person name="Ross M.T."/>
            <person name="Harrow J."/>
            <person name="Olson M.V."/>
            <person name="Beck S."/>
            <person name="Rogers J."/>
            <person name="Bentley D.R."/>
        </authorList>
    </citation>
    <scope>NUCLEOTIDE SEQUENCE [LARGE SCALE GENOMIC DNA]</scope>
</reference>
<reference key="4">
    <citation type="journal article" date="2004" name="Genome Res.">
        <title>The status, quality, and expansion of the NIH full-length cDNA project: the Mammalian Gene Collection (MGC).</title>
        <authorList>
            <consortium name="The MGC Project Team"/>
        </authorList>
    </citation>
    <scope>NUCLEOTIDE SEQUENCE [LARGE SCALE MRNA]</scope>
    <source>
        <tissue>Brain</tissue>
    </source>
</reference>
<reference key="5">
    <citation type="submission" date="2007-03" db="UniProtKB">
        <authorList>
            <person name="Lubec G."/>
            <person name="Afjehi-Sadat L."/>
        </authorList>
    </citation>
    <scope>PROTEIN SEQUENCE OF 10-26</scope>
    <scope>IDENTIFICATION BY MASS SPECTROMETRY</scope>
    <source>
        <tissue>Brain</tissue>
        <tissue>Cajal-Retzius cell</tissue>
    </source>
</reference>
<reference key="6">
    <citation type="journal article" date="2011" name="BMC Syst. Biol.">
        <title>Initial characterization of the human central proteome.</title>
        <authorList>
            <person name="Burkard T.R."/>
            <person name="Planyavsky M."/>
            <person name="Kaupe I."/>
            <person name="Breitwieser F.P."/>
            <person name="Buerckstuemmer T."/>
            <person name="Bennett K.L."/>
            <person name="Superti-Furga G."/>
            <person name="Colinge J."/>
        </authorList>
    </citation>
    <scope>IDENTIFICATION BY MASS SPECTROMETRY [LARGE SCALE ANALYSIS]</scope>
</reference>
<reference key="7">
    <citation type="journal article" date="2013" name="J. Proteome Res.">
        <title>Toward a comprehensive characterization of a human cancer cell phosphoproteome.</title>
        <authorList>
            <person name="Zhou H."/>
            <person name="Di Palma S."/>
            <person name="Preisinger C."/>
            <person name="Peng M."/>
            <person name="Polat A.N."/>
            <person name="Heck A.J."/>
            <person name="Mohammed S."/>
        </authorList>
    </citation>
    <scope>PHOSPHORYLATION [LARGE SCALE ANALYSIS] AT SER-75</scope>
    <scope>IDENTIFICATION BY MASS SPECTROMETRY [LARGE SCALE ANALYSIS]</scope>
    <source>
        <tissue>Erythroleukemia</tissue>
    </source>
</reference>
<reference key="8">
    <citation type="journal article" date="2014" name="J. Proteomics">
        <title>An enzyme assisted RP-RPLC approach for in-depth analysis of human liver phosphoproteome.</title>
        <authorList>
            <person name="Bian Y."/>
            <person name="Song C."/>
            <person name="Cheng K."/>
            <person name="Dong M."/>
            <person name="Wang F."/>
            <person name="Huang J."/>
            <person name="Sun D."/>
            <person name="Wang L."/>
            <person name="Ye M."/>
            <person name="Zou H."/>
        </authorList>
    </citation>
    <scope>IDENTIFICATION BY MASS SPECTROMETRY [LARGE SCALE ANALYSIS]</scope>
    <source>
        <tissue>Liver</tissue>
    </source>
</reference>
<reference key="9">
    <citation type="journal article" date="2016" name="Acta Crystallogr. F Struct. Biol. Commun.">
        <title>Cloning, expression, purification, crystallization and X-ray crystallographic analysis of recombinant human C1ORF123 protein.</title>
        <authorList>
            <person name="Rahaman S.N."/>
            <person name="Mat Yusop J."/>
            <person name="Mohamed-Hussein Z.A."/>
            <person name="Ho K.L."/>
            <person name="Teh A.H."/>
            <person name="Waterman J."/>
            <person name="Ng C.L."/>
        </authorList>
    </citation>
    <scope>CRYSTALLIZATION</scope>
    <scope>SUBUNIT</scope>
</reference>
<reference evidence="6" key="10">
    <citation type="journal article" date="2018" name="PLoS ONE">
        <title>Identification of a novel zinc-binding protein, C1orf123, as an interactor with a heavy metal-associated domain.</title>
        <authorList>
            <person name="Furukawa Y."/>
            <person name="Lim C."/>
            <person name="Tosha T."/>
            <person name="Yoshida K."/>
            <person name="Hagai T."/>
            <person name="Akiyama S."/>
            <person name="Watanabe S."/>
            <person name="Nakagome K."/>
            <person name="Shiro Y."/>
        </authorList>
    </citation>
    <scope>X-RAY CRYSTALLOGRAPHY (2.00 ANGSTROMS) IN COMPLEX WITH ZINC IONS</scope>
    <scope>SUBUNIT</scope>
    <scope>DOMAIN</scope>
    <scope>MUTAGENESIS OF CYS-33; CYS-36; CYS-67 AND CYS-70</scope>
</reference>
<reference evidence="7" key="11">
    <citation type="journal article" date="2018" name="PeerJ">
        <title>Crystal structure and functional analysis of human C1ORF123.</title>
        <authorList>
            <person name="Rahaman S.N."/>
            <person name="Mat Yusop J."/>
            <person name="Mohamed-Hussein Z.A."/>
            <person name="Aizat W.M."/>
            <person name="Ho K.L."/>
            <person name="Teh A.H."/>
            <person name="Waterman J."/>
            <person name="Tan B.K."/>
            <person name="Tan H.L."/>
            <person name="Li A.Y."/>
            <person name="Chen E.S."/>
            <person name="Ng C.L."/>
        </authorList>
    </citation>
    <scope>X-RAY CRYSTALLOGRAPHY (1.90 ANGSTROMS) IN COMPLEX WITH ZINC IONS</scope>
    <scope>SUBUNIT</scope>
    <scope>DOMAIN</scope>
</reference>
<feature type="chain" id="PRO_0000264151" description="CXXC motif containing zinc binding protein">
    <location>
        <begin position="1"/>
        <end position="160"/>
    </location>
</feature>
<feature type="binding site" evidence="2 3 6 7">
    <location>
        <position position="33"/>
    </location>
    <ligand>
        <name>Zn(2+)</name>
        <dbReference type="ChEBI" id="CHEBI:29105"/>
    </ligand>
</feature>
<feature type="binding site" evidence="2 3 6 7">
    <location>
        <position position="36"/>
    </location>
    <ligand>
        <name>Zn(2+)</name>
        <dbReference type="ChEBI" id="CHEBI:29105"/>
    </ligand>
</feature>
<feature type="binding site" evidence="2 3 6 7">
    <location>
        <position position="67"/>
    </location>
    <ligand>
        <name>Zn(2+)</name>
        <dbReference type="ChEBI" id="CHEBI:29105"/>
    </ligand>
</feature>
<feature type="binding site" evidence="2 3 6 7">
    <location>
        <position position="70"/>
    </location>
    <ligand>
        <name>Zn(2+)</name>
        <dbReference type="ChEBI" id="CHEBI:29105"/>
    </ligand>
</feature>
<feature type="modified residue" description="Phosphoserine" evidence="8">
    <location>
        <position position="75"/>
    </location>
</feature>
<feature type="mutagenesis site" description="Disrupts protein folding and solubility; when associated with A-36; A-67 and A-70." evidence="2">
    <original>C</original>
    <variation>A</variation>
    <location>
        <position position="33"/>
    </location>
</feature>
<feature type="mutagenesis site" description="Disrupts protein folding and solubility; when associated with A-33; A-67 and A-70." evidence="2">
    <original>C</original>
    <variation>A</variation>
    <location>
        <position position="36"/>
    </location>
</feature>
<feature type="mutagenesis site" description="Disrupts protein folding and solubility; when associated with A-33; A-36 and A-70." evidence="2">
    <original>C</original>
    <variation>A</variation>
    <location>
        <position position="67"/>
    </location>
</feature>
<feature type="mutagenesis site" description="Disrupts protein folding and solubility; when associated with A-33; A-36 and A-67." evidence="2">
    <original>C</original>
    <variation>A</variation>
    <location>
        <position position="70"/>
    </location>
</feature>
<feature type="strand" evidence="9">
    <location>
        <begin position="2"/>
        <end position="20"/>
    </location>
</feature>
<feature type="strand" evidence="9">
    <location>
        <begin position="27"/>
        <end position="33"/>
    </location>
</feature>
<feature type="turn" evidence="9">
    <location>
        <begin position="34"/>
        <end position="36"/>
    </location>
</feature>
<feature type="strand" evidence="9">
    <location>
        <begin position="44"/>
        <end position="46"/>
    </location>
</feature>
<feature type="helix" evidence="9">
    <location>
        <begin position="48"/>
        <end position="50"/>
    </location>
</feature>
<feature type="strand" evidence="9">
    <location>
        <begin position="60"/>
        <end position="66"/>
    </location>
</feature>
<feature type="turn" evidence="9">
    <location>
        <begin position="68"/>
        <end position="70"/>
    </location>
</feature>
<feature type="strand" evidence="9">
    <location>
        <begin position="73"/>
        <end position="79"/>
    </location>
</feature>
<feature type="helix" evidence="9">
    <location>
        <begin position="80"/>
        <end position="82"/>
    </location>
</feature>
<feature type="helix" evidence="9">
    <location>
        <begin position="88"/>
        <end position="90"/>
    </location>
</feature>
<feature type="strand" evidence="9">
    <location>
        <begin position="95"/>
        <end position="111"/>
    </location>
</feature>
<feature type="strand" evidence="9">
    <location>
        <begin position="116"/>
        <end position="120"/>
    </location>
</feature>
<feature type="turn" evidence="9">
    <location>
        <begin position="121"/>
        <end position="123"/>
    </location>
</feature>
<feature type="strand" evidence="9">
    <location>
        <begin position="126"/>
        <end position="130"/>
    </location>
</feature>
<feature type="strand" evidence="9">
    <location>
        <begin position="137"/>
        <end position="141"/>
    </location>
</feature>
<feature type="turn" evidence="9">
    <location>
        <begin position="142"/>
        <end position="145"/>
    </location>
</feature>
<feature type="strand" evidence="9">
    <location>
        <begin position="146"/>
        <end position="159"/>
    </location>
</feature>
<evidence type="ECO:0000269" key="1">
    <source>
    </source>
</evidence>
<evidence type="ECO:0000269" key="2">
    <source>
    </source>
</evidence>
<evidence type="ECO:0000269" key="3">
    <source>
    </source>
</evidence>
<evidence type="ECO:0000305" key="4"/>
<evidence type="ECO:0000312" key="5">
    <source>
        <dbReference type="HGNC" id="HGNC:26059"/>
    </source>
</evidence>
<evidence type="ECO:0007744" key="6">
    <source>
        <dbReference type="PDB" id="5ZLQ"/>
    </source>
</evidence>
<evidence type="ECO:0007744" key="7">
    <source>
        <dbReference type="PDB" id="5ZRT"/>
    </source>
</evidence>
<evidence type="ECO:0007744" key="8">
    <source>
    </source>
</evidence>
<evidence type="ECO:0007829" key="9">
    <source>
        <dbReference type="PDB" id="5ZRT"/>
    </source>
</evidence>
<sequence length="160" mass="18048">MGKIALQLKATLENITNLRPVGEDFRWYLKMKCGNCGEISDKWQYIRLMDSVALKGGRGSASMVQKCKLCARENSIEILSSTIKPYNAEDNENFKTIVEFECRGLEPVDFQPQAGFAAEGVESGTAFSDINLQEKDWTDYDEKAQESVGIYEVTHQFVKC</sequence>
<organism>
    <name type="scientific">Homo sapiens</name>
    <name type="common">Human</name>
    <dbReference type="NCBI Taxonomy" id="9606"/>
    <lineage>
        <taxon>Eukaryota</taxon>
        <taxon>Metazoa</taxon>
        <taxon>Chordata</taxon>
        <taxon>Craniata</taxon>
        <taxon>Vertebrata</taxon>
        <taxon>Euteleostomi</taxon>
        <taxon>Mammalia</taxon>
        <taxon>Eutheria</taxon>
        <taxon>Euarchontoglires</taxon>
        <taxon>Primates</taxon>
        <taxon>Haplorrhini</taxon>
        <taxon>Catarrhini</taxon>
        <taxon>Hominidae</taxon>
        <taxon>Homo</taxon>
    </lineage>
</organism>
<name>CZIB_HUMAN</name>
<protein>
    <recommendedName>
        <fullName evidence="4">CXXC motif containing zinc binding protein</fullName>
    </recommendedName>
    <alternativeName>
        <fullName>UPF0587 protein C1orf123</fullName>
    </alternativeName>
</protein>
<gene>
    <name evidence="5" type="primary">CZIB</name>
    <name evidence="5" type="synonym">C1orf123</name>
</gene>
<dbReference type="EMBL" id="AK000587">
    <property type="protein sequence ID" value="BAA91272.1"/>
    <property type="molecule type" value="mRNA"/>
</dbReference>
<dbReference type="EMBL" id="CR457246">
    <property type="protein sequence ID" value="CAG33527.1"/>
    <property type="molecule type" value="mRNA"/>
</dbReference>
<dbReference type="EMBL" id="AL606760">
    <property type="status" value="NOT_ANNOTATED_CDS"/>
    <property type="molecule type" value="Genomic_DNA"/>
</dbReference>
<dbReference type="EMBL" id="BC010908">
    <property type="protein sequence ID" value="AAH10908.1"/>
    <property type="molecule type" value="mRNA"/>
</dbReference>
<dbReference type="CCDS" id="CCDS576.1"/>
<dbReference type="RefSeq" id="NP_001291688.1">
    <property type="nucleotide sequence ID" value="NM_001304759.1"/>
</dbReference>
<dbReference type="RefSeq" id="NP_001291689.1">
    <property type="nucleotide sequence ID" value="NM_001304760.1"/>
</dbReference>
<dbReference type="RefSeq" id="NP_060357.1">
    <property type="nucleotide sequence ID" value="NM_017887.3"/>
</dbReference>
<dbReference type="PDB" id="5ZLQ">
    <property type="method" value="X-ray"/>
    <property type="resolution" value="2.00 A"/>
    <property type="chains" value="A=1-160"/>
</dbReference>
<dbReference type="PDB" id="5ZRT">
    <property type="method" value="X-ray"/>
    <property type="resolution" value="1.90 A"/>
    <property type="chains" value="A/B=1-160"/>
</dbReference>
<dbReference type="PDBsum" id="5ZLQ"/>
<dbReference type="PDBsum" id="5ZRT"/>
<dbReference type="SMR" id="Q9NWV4"/>
<dbReference type="BioGRID" id="120322">
    <property type="interactions" value="34"/>
</dbReference>
<dbReference type="FunCoup" id="Q9NWV4">
    <property type="interactions" value="1578"/>
</dbReference>
<dbReference type="IntAct" id="Q9NWV4">
    <property type="interactions" value="14"/>
</dbReference>
<dbReference type="MINT" id="Q9NWV4"/>
<dbReference type="STRING" id="9606.ENSP00000294360"/>
<dbReference type="GlyGen" id="Q9NWV4">
    <property type="glycosylation" value="1 site, 1 O-linked glycan (1 site)"/>
</dbReference>
<dbReference type="iPTMnet" id="Q9NWV4"/>
<dbReference type="MetOSite" id="Q9NWV4"/>
<dbReference type="PhosphoSitePlus" id="Q9NWV4"/>
<dbReference type="BioMuta" id="C1orf123"/>
<dbReference type="DMDM" id="74753033"/>
<dbReference type="REPRODUCTION-2DPAGE" id="IPI00016605"/>
<dbReference type="jPOST" id="Q9NWV4"/>
<dbReference type="MassIVE" id="Q9NWV4"/>
<dbReference type="PaxDb" id="9606-ENSP00000294360"/>
<dbReference type="PeptideAtlas" id="Q9NWV4"/>
<dbReference type="ProteomicsDB" id="82985"/>
<dbReference type="Pumba" id="Q9NWV4"/>
<dbReference type="Antibodypedia" id="52610">
    <property type="antibodies" value="64 antibodies from 10 providers"/>
</dbReference>
<dbReference type="DNASU" id="54987"/>
<dbReference type="Ensembl" id="ENST00000294360.5">
    <property type="protein sequence ID" value="ENSP00000294360.4"/>
    <property type="gene ID" value="ENSG00000162384.14"/>
</dbReference>
<dbReference type="GeneID" id="54987"/>
<dbReference type="KEGG" id="hsa:54987"/>
<dbReference type="MANE-Select" id="ENST00000294360.5">
    <property type="protein sequence ID" value="ENSP00000294360.4"/>
    <property type="RefSeq nucleotide sequence ID" value="NM_017887.3"/>
    <property type="RefSeq protein sequence ID" value="NP_060357.1"/>
</dbReference>
<dbReference type="UCSC" id="uc001cvd.4">
    <property type="organism name" value="human"/>
</dbReference>
<dbReference type="AGR" id="HGNC:26059"/>
<dbReference type="CTD" id="54987"/>
<dbReference type="DisGeNET" id="54987"/>
<dbReference type="GeneCards" id="CZIB"/>
<dbReference type="HGNC" id="HGNC:26059">
    <property type="gene designation" value="CZIB"/>
</dbReference>
<dbReference type="HPA" id="ENSG00000162384">
    <property type="expression patterns" value="Low tissue specificity"/>
</dbReference>
<dbReference type="neXtProt" id="NX_Q9NWV4"/>
<dbReference type="OpenTargets" id="ENSG00000162384"/>
<dbReference type="PharmGKB" id="PA142672441"/>
<dbReference type="VEuPathDB" id="HostDB:ENSG00000162384"/>
<dbReference type="eggNOG" id="KOG1296">
    <property type="taxonomic scope" value="Eukaryota"/>
</dbReference>
<dbReference type="GeneTree" id="ENSGT00390000001523"/>
<dbReference type="HOGENOM" id="CLU_114688_1_0_1"/>
<dbReference type="InParanoid" id="Q9NWV4"/>
<dbReference type="OMA" id="TAHFVWR"/>
<dbReference type="OrthoDB" id="10248838at2759"/>
<dbReference type="PAN-GO" id="Q9NWV4">
    <property type="GO annotations" value="1 GO annotation based on evolutionary models"/>
</dbReference>
<dbReference type="PhylomeDB" id="Q9NWV4"/>
<dbReference type="TreeFam" id="TF105959"/>
<dbReference type="PathwayCommons" id="Q9NWV4"/>
<dbReference type="SignaLink" id="Q9NWV4"/>
<dbReference type="BioGRID-ORCS" id="54987">
    <property type="hits" value="18 hits in 1129 CRISPR screens"/>
</dbReference>
<dbReference type="ChiTaRS" id="C1orf123">
    <property type="organism name" value="human"/>
</dbReference>
<dbReference type="GenomeRNAi" id="54987"/>
<dbReference type="Pharos" id="Q9NWV4">
    <property type="development level" value="Tdark"/>
</dbReference>
<dbReference type="PRO" id="PR:Q9NWV4"/>
<dbReference type="Proteomes" id="UP000005640">
    <property type="component" value="Chromosome 1"/>
</dbReference>
<dbReference type="RNAct" id="Q9NWV4">
    <property type="molecule type" value="protein"/>
</dbReference>
<dbReference type="Bgee" id="ENSG00000162384">
    <property type="expression patterns" value="Expressed in tendon of biceps brachii and 208 other cell types or tissues"/>
</dbReference>
<dbReference type="GO" id="GO:0008270">
    <property type="term" value="F:zinc ion binding"/>
    <property type="evidence" value="ECO:0000314"/>
    <property type="project" value="UniProtKB"/>
</dbReference>
<dbReference type="InterPro" id="IPR008584">
    <property type="entry name" value="CXXC_Zn-binding_euk"/>
</dbReference>
<dbReference type="PANTHER" id="PTHR12857">
    <property type="entry name" value="CXXC MOTIF CONTAINING ZINC BINDING PROTEIN"/>
    <property type="match status" value="1"/>
</dbReference>
<dbReference type="PANTHER" id="PTHR12857:SF0">
    <property type="entry name" value="CXXC MOTIF CONTAINING ZINC BINDING PROTEIN"/>
    <property type="match status" value="1"/>
</dbReference>
<dbReference type="Pfam" id="PF05907">
    <property type="entry name" value="CXXC_Zn-b_euk"/>
    <property type="match status" value="1"/>
</dbReference>
<dbReference type="SUPFAM" id="SSF141678">
    <property type="entry name" value="MAL13P1.257-like"/>
    <property type="match status" value="1"/>
</dbReference>
<comment type="subunit">
    <text evidence="1 2 3">Monomer.</text>
</comment>
<comment type="interaction">
    <interactant intactId="EBI-724109">
        <id>Q9NWV4</id>
    </interactant>
    <interactant intactId="EBI-11668690">
        <id>O14618</id>
        <label>CCS</label>
    </interactant>
    <organismsDiffer>false</organismsDiffer>
    <experiments>3</experiments>
</comment>
<comment type="domain">
    <text evidence="2 3">The N-terminal and the C-terminal half of the protein have a very similar 3D-structure, suggesting they arose from duplication (PubMed:30280012). Requires a bound zinc ion for normal folding and solubility (PubMed:30260988).</text>
</comment>
<comment type="similarity">
    <text evidence="4">Belongs to the UPF0587 family.</text>
</comment>
<comment type="caution">
    <text evidence="2">Was identified as interaction partner for CCS (PubMed:30260988). Only misfolded mutant protein forms that lack part of the zinc-binding sites interact with CCS. The full-length protein does not interact with CCS. Likewise, mutant protein that lacks all four zinc-binding residues does not interact with CCS (PubMed:30260988).</text>
</comment>
<proteinExistence type="evidence at protein level"/>
<accession>Q9NWV4</accession>